<name>Y1601_STRA5</name>
<organism>
    <name type="scientific">Streptococcus agalactiae serotype V (strain ATCC BAA-611 / 2603 V/R)</name>
    <dbReference type="NCBI Taxonomy" id="208435"/>
    <lineage>
        <taxon>Bacteria</taxon>
        <taxon>Bacillati</taxon>
        <taxon>Bacillota</taxon>
        <taxon>Bacilli</taxon>
        <taxon>Lactobacillales</taxon>
        <taxon>Streptococcaceae</taxon>
        <taxon>Streptococcus</taxon>
    </lineage>
</organism>
<sequence>MSITIWILLIIVALFGGLVGGIFIARKQIEKEIGEHPRLTPDAIREMMSQMGQKPSEAKVQQTYRNIVKHAKTAIKTKK</sequence>
<feature type="chain" id="PRO_0000214984" description="UPF0154 protein SAG1601">
    <location>
        <begin position="1"/>
        <end position="79"/>
    </location>
</feature>
<feature type="transmembrane region" description="Helical" evidence="1">
    <location>
        <begin position="5"/>
        <end position="25"/>
    </location>
</feature>
<keyword id="KW-0472">Membrane</keyword>
<keyword id="KW-1185">Reference proteome</keyword>
<keyword id="KW-0812">Transmembrane</keyword>
<keyword id="KW-1133">Transmembrane helix</keyword>
<reference key="1">
    <citation type="journal article" date="2002" name="Proc. Natl. Acad. Sci. U.S.A.">
        <title>Complete genome sequence and comparative genomic analysis of an emerging human pathogen, serotype V Streptococcus agalactiae.</title>
        <authorList>
            <person name="Tettelin H."/>
            <person name="Masignani V."/>
            <person name="Cieslewicz M.J."/>
            <person name="Eisen J.A."/>
            <person name="Peterson S.N."/>
            <person name="Wessels M.R."/>
            <person name="Paulsen I.T."/>
            <person name="Nelson K.E."/>
            <person name="Margarit I."/>
            <person name="Read T.D."/>
            <person name="Madoff L.C."/>
            <person name="Wolf A.M."/>
            <person name="Beanan M.J."/>
            <person name="Brinkac L.M."/>
            <person name="Daugherty S.C."/>
            <person name="DeBoy R.T."/>
            <person name="Durkin A.S."/>
            <person name="Kolonay J.F."/>
            <person name="Madupu R."/>
            <person name="Lewis M.R."/>
            <person name="Radune D."/>
            <person name="Fedorova N.B."/>
            <person name="Scanlan D."/>
            <person name="Khouri H.M."/>
            <person name="Mulligan S."/>
            <person name="Carty H.A."/>
            <person name="Cline R.T."/>
            <person name="Van Aken S.E."/>
            <person name="Gill J."/>
            <person name="Scarselli M."/>
            <person name="Mora M."/>
            <person name="Iacobini E.T."/>
            <person name="Brettoni C."/>
            <person name="Galli G."/>
            <person name="Mariani M."/>
            <person name="Vegni F."/>
            <person name="Maione D."/>
            <person name="Rinaudo D."/>
            <person name="Rappuoli R."/>
            <person name="Telford J.L."/>
            <person name="Kasper D.L."/>
            <person name="Grandi G."/>
            <person name="Fraser C.M."/>
        </authorList>
    </citation>
    <scope>NUCLEOTIDE SEQUENCE [LARGE SCALE GENOMIC DNA]</scope>
    <source>
        <strain>ATCC BAA-611 / 2603 V/R</strain>
    </source>
</reference>
<comment type="subcellular location">
    <subcellularLocation>
        <location evidence="2">Membrane</location>
        <topology evidence="2">Single-pass membrane protein</topology>
    </subcellularLocation>
</comment>
<comment type="similarity">
    <text evidence="2">Belongs to the UPF0154 family.</text>
</comment>
<proteinExistence type="inferred from homology"/>
<dbReference type="EMBL" id="AE009948">
    <property type="protein sequence ID" value="AAN00465.1"/>
    <property type="molecule type" value="Genomic_DNA"/>
</dbReference>
<dbReference type="RefSeq" id="NP_688592.1">
    <property type="nucleotide sequence ID" value="NC_004116.1"/>
</dbReference>
<dbReference type="RefSeq" id="WP_000028863.1">
    <property type="nucleotide sequence ID" value="NC_004116.1"/>
</dbReference>
<dbReference type="SMR" id="Q8DY91"/>
<dbReference type="STRING" id="208435.SAG1601"/>
<dbReference type="KEGG" id="sag:SAG1601"/>
<dbReference type="PATRIC" id="fig|208435.3.peg.1611"/>
<dbReference type="HOGENOM" id="CLU_180108_0_0_9"/>
<dbReference type="OrthoDB" id="1769076at2"/>
<dbReference type="Proteomes" id="UP000000821">
    <property type="component" value="Chromosome"/>
</dbReference>
<dbReference type="GO" id="GO:0005886">
    <property type="term" value="C:plasma membrane"/>
    <property type="evidence" value="ECO:0007669"/>
    <property type="project" value="UniProtKB-UniRule"/>
</dbReference>
<dbReference type="HAMAP" id="MF_00363">
    <property type="entry name" value="UPF0154"/>
    <property type="match status" value="1"/>
</dbReference>
<dbReference type="InterPro" id="IPR005359">
    <property type="entry name" value="UPF0154"/>
</dbReference>
<dbReference type="Pfam" id="PF03672">
    <property type="entry name" value="UPF0154"/>
    <property type="match status" value="1"/>
</dbReference>
<accession>Q8DY91</accession>
<protein>
    <recommendedName>
        <fullName>UPF0154 protein SAG1601</fullName>
    </recommendedName>
</protein>
<evidence type="ECO:0000255" key="1"/>
<evidence type="ECO:0000305" key="2"/>
<gene>
    <name type="ordered locus">SAG1601</name>
</gene>